<sequence length="192" mass="20923">MPIILGIDPGSRVTGYGVIRQTGRHLEYLGSGAIRTSVDDLPTRLKRIYAGVTEIITQFHPDMFAIEQVFMAKNADSALKLGQARGTAIVAAVNHDLPVFEYAARLVKQTVTGIGSADKIQVQDMVTRMLQLSSKPQADAADALAIAITHAHSIQHSLIVAKQSDQKVGSDKEQILALMKTRYSRGRFRLKG</sequence>
<evidence type="ECO:0000255" key="1">
    <source>
        <dbReference type="HAMAP-Rule" id="MF_00034"/>
    </source>
</evidence>
<comment type="function">
    <text evidence="1">The RuvA-RuvB-RuvC complex processes Holliday junction (HJ) DNA during genetic recombination and DNA repair. Endonuclease that resolves HJ intermediates. Cleaves cruciform DNA by making single-stranded nicks across the HJ at symmetrical positions within the homologous arms, yielding a 5'-phosphate and a 3'-hydroxyl group; requires a central core of homology in the junction. The consensus cleavage sequence is 5'-(A/T)TT(C/G)-3'. Cleavage occurs on the 3'-side of the TT dinucleotide at the point of strand exchange. HJ branch migration catalyzed by RuvA-RuvB allows RuvC to scan DNA until it finds its consensus sequence, where it cleaves and resolves the cruciform DNA.</text>
</comment>
<comment type="catalytic activity">
    <reaction evidence="1">
        <text>Endonucleolytic cleavage at a junction such as a reciprocal single-stranded crossover between two homologous DNA duplexes (Holliday junction).</text>
        <dbReference type="EC" id="3.1.21.10"/>
    </reaction>
</comment>
<comment type="cofactor">
    <cofactor evidence="1">
        <name>Mg(2+)</name>
        <dbReference type="ChEBI" id="CHEBI:18420"/>
    </cofactor>
    <text evidence="1">Binds 2 Mg(2+) ion per subunit.</text>
</comment>
<comment type="subunit">
    <text evidence="1">Homodimer which binds Holliday junction (HJ) DNA. The HJ becomes 2-fold symmetrical on binding to RuvC with unstacked arms; it has a different conformation from HJ DNA in complex with RuvA. In the full resolvosome a probable DNA-RuvA(4)-RuvB(12)-RuvC(2) complex forms which resolves the HJ.</text>
</comment>
<comment type="subcellular location">
    <subcellularLocation>
        <location evidence="1">Cytoplasm</location>
    </subcellularLocation>
</comment>
<comment type="similarity">
    <text evidence="1">Belongs to the RuvC family.</text>
</comment>
<keyword id="KW-0963">Cytoplasm</keyword>
<keyword id="KW-0227">DNA damage</keyword>
<keyword id="KW-0233">DNA recombination</keyword>
<keyword id="KW-0234">DNA repair</keyword>
<keyword id="KW-0238">DNA-binding</keyword>
<keyword id="KW-0255">Endonuclease</keyword>
<keyword id="KW-0378">Hydrolase</keyword>
<keyword id="KW-0460">Magnesium</keyword>
<keyword id="KW-0479">Metal-binding</keyword>
<keyword id="KW-0540">Nuclease</keyword>
<protein>
    <recommendedName>
        <fullName evidence="1">Crossover junction endodeoxyribonuclease RuvC</fullName>
        <ecNumber evidence="1">3.1.21.10</ecNumber>
    </recommendedName>
    <alternativeName>
        <fullName evidence="1">Holliday junction nuclease RuvC</fullName>
    </alternativeName>
    <alternativeName>
        <fullName evidence="1">Holliday junction resolvase RuvC</fullName>
    </alternativeName>
</protein>
<gene>
    <name evidence="1" type="primary">ruvC</name>
    <name type="ordered locus">APP7_1212</name>
</gene>
<accession>B3GY41</accession>
<name>RUVC_ACTP7</name>
<reference key="1">
    <citation type="submission" date="2008-06" db="EMBL/GenBank/DDBJ databases">
        <title>Genome and proteome analysis of A. pleuropneumoniae serotype 7.</title>
        <authorList>
            <person name="Linke B."/>
            <person name="Buettner F."/>
            <person name="Martinez-Arias R."/>
            <person name="Goesmann A."/>
            <person name="Baltes N."/>
            <person name="Tegetmeyer H."/>
            <person name="Singh M."/>
            <person name="Gerlach G.F."/>
        </authorList>
    </citation>
    <scope>NUCLEOTIDE SEQUENCE [LARGE SCALE GENOMIC DNA]</scope>
    <source>
        <strain>AP76</strain>
    </source>
</reference>
<proteinExistence type="inferred from homology"/>
<organism>
    <name type="scientific">Actinobacillus pleuropneumoniae serotype 7 (strain AP76)</name>
    <dbReference type="NCBI Taxonomy" id="537457"/>
    <lineage>
        <taxon>Bacteria</taxon>
        <taxon>Pseudomonadati</taxon>
        <taxon>Pseudomonadota</taxon>
        <taxon>Gammaproteobacteria</taxon>
        <taxon>Pasteurellales</taxon>
        <taxon>Pasteurellaceae</taxon>
        <taxon>Actinobacillus</taxon>
    </lineage>
</organism>
<feature type="chain" id="PRO_1000090498" description="Crossover junction endodeoxyribonuclease RuvC">
    <location>
        <begin position="1"/>
        <end position="192"/>
    </location>
</feature>
<feature type="active site" evidence="1">
    <location>
        <position position="8"/>
    </location>
</feature>
<feature type="active site" evidence="1">
    <location>
        <position position="67"/>
    </location>
</feature>
<feature type="active site" evidence="1">
    <location>
        <position position="139"/>
    </location>
</feature>
<feature type="binding site" evidence="1">
    <location>
        <position position="8"/>
    </location>
    <ligand>
        <name>Mg(2+)</name>
        <dbReference type="ChEBI" id="CHEBI:18420"/>
        <label>1</label>
    </ligand>
</feature>
<feature type="binding site" evidence="1">
    <location>
        <position position="67"/>
    </location>
    <ligand>
        <name>Mg(2+)</name>
        <dbReference type="ChEBI" id="CHEBI:18420"/>
        <label>2</label>
    </ligand>
</feature>
<feature type="binding site" evidence="1">
    <location>
        <position position="139"/>
    </location>
    <ligand>
        <name>Mg(2+)</name>
        <dbReference type="ChEBI" id="CHEBI:18420"/>
        <label>1</label>
    </ligand>
</feature>
<dbReference type="EC" id="3.1.21.10" evidence="1"/>
<dbReference type="EMBL" id="CP001091">
    <property type="protein sequence ID" value="ACE61864.1"/>
    <property type="molecule type" value="Genomic_DNA"/>
</dbReference>
<dbReference type="RefSeq" id="WP_005615497.1">
    <property type="nucleotide sequence ID" value="NC_010939.1"/>
</dbReference>
<dbReference type="SMR" id="B3GY41"/>
<dbReference type="KEGG" id="apa:APP7_1212"/>
<dbReference type="HOGENOM" id="CLU_091257_2_1_6"/>
<dbReference type="Proteomes" id="UP000001226">
    <property type="component" value="Chromosome"/>
</dbReference>
<dbReference type="GO" id="GO:0005737">
    <property type="term" value="C:cytoplasm"/>
    <property type="evidence" value="ECO:0007669"/>
    <property type="project" value="UniProtKB-SubCell"/>
</dbReference>
<dbReference type="GO" id="GO:0048476">
    <property type="term" value="C:Holliday junction resolvase complex"/>
    <property type="evidence" value="ECO:0007669"/>
    <property type="project" value="UniProtKB-UniRule"/>
</dbReference>
<dbReference type="GO" id="GO:0008821">
    <property type="term" value="F:crossover junction DNA endonuclease activity"/>
    <property type="evidence" value="ECO:0007669"/>
    <property type="project" value="UniProtKB-UniRule"/>
</dbReference>
<dbReference type="GO" id="GO:0003677">
    <property type="term" value="F:DNA binding"/>
    <property type="evidence" value="ECO:0007669"/>
    <property type="project" value="UniProtKB-KW"/>
</dbReference>
<dbReference type="GO" id="GO:0000287">
    <property type="term" value="F:magnesium ion binding"/>
    <property type="evidence" value="ECO:0007669"/>
    <property type="project" value="UniProtKB-UniRule"/>
</dbReference>
<dbReference type="GO" id="GO:0006310">
    <property type="term" value="P:DNA recombination"/>
    <property type="evidence" value="ECO:0007669"/>
    <property type="project" value="UniProtKB-UniRule"/>
</dbReference>
<dbReference type="GO" id="GO:0006281">
    <property type="term" value="P:DNA repair"/>
    <property type="evidence" value="ECO:0007669"/>
    <property type="project" value="UniProtKB-UniRule"/>
</dbReference>
<dbReference type="CDD" id="cd16962">
    <property type="entry name" value="RuvC"/>
    <property type="match status" value="1"/>
</dbReference>
<dbReference type="FunFam" id="3.30.420.10:FF:000002">
    <property type="entry name" value="Crossover junction endodeoxyribonuclease RuvC"/>
    <property type="match status" value="1"/>
</dbReference>
<dbReference type="Gene3D" id="3.30.420.10">
    <property type="entry name" value="Ribonuclease H-like superfamily/Ribonuclease H"/>
    <property type="match status" value="1"/>
</dbReference>
<dbReference type="HAMAP" id="MF_00034">
    <property type="entry name" value="RuvC"/>
    <property type="match status" value="1"/>
</dbReference>
<dbReference type="InterPro" id="IPR012337">
    <property type="entry name" value="RNaseH-like_sf"/>
</dbReference>
<dbReference type="InterPro" id="IPR036397">
    <property type="entry name" value="RNaseH_sf"/>
</dbReference>
<dbReference type="InterPro" id="IPR020563">
    <property type="entry name" value="X-over_junc_endoDNase_Mg_BS"/>
</dbReference>
<dbReference type="InterPro" id="IPR002176">
    <property type="entry name" value="X-over_junc_endoDNase_RuvC"/>
</dbReference>
<dbReference type="NCBIfam" id="TIGR00228">
    <property type="entry name" value="ruvC"/>
    <property type="match status" value="1"/>
</dbReference>
<dbReference type="PANTHER" id="PTHR30194">
    <property type="entry name" value="CROSSOVER JUNCTION ENDODEOXYRIBONUCLEASE RUVC"/>
    <property type="match status" value="1"/>
</dbReference>
<dbReference type="PANTHER" id="PTHR30194:SF3">
    <property type="entry name" value="CROSSOVER JUNCTION ENDODEOXYRIBONUCLEASE RUVC"/>
    <property type="match status" value="1"/>
</dbReference>
<dbReference type="Pfam" id="PF02075">
    <property type="entry name" value="RuvC"/>
    <property type="match status" value="1"/>
</dbReference>
<dbReference type="PRINTS" id="PR00696">
    <property type="entry name" value="RSOLVASERUVC"/>
</dbReference>
<dbReference type="SUPFAM" id="SSF53098">
    <property type="entry name" value="Ribonuclease H-like"/>
    <property type="match status" value="1"/>
</dbReference>
<dbReference type="PROSITE" id="PS01321">
    <property type="entry name" value="RUVC"/>
    <property type="match status" value="1"/>
</dbReference>